<reference key="1">
    <citation type="journal article" date="2008" name="J. Bacteriol.">
        <title>Genome sequence of Staphylococcus aureus strain Newman and comparative analysis of staphylococcal genomes: polymorphism and evolution of two major pathogenicity islands.</title>
        <authorList>
            <person name="Baba T."/>
            <person name="Bae T."/>
            <person name="Schneewind O."/>
            <person name="Takeuchi F."/>
            <person name="Hiramatsu K."/>
        </authorList>
    </citation>
    <scope>NUCLEOTIDE SEQUENCE [LARGE SCALE GENOMIC DNA]</scope>
    <source>
        <strain>Newman</strain>
    </source>
</reference>
<reference key="2">
    <citation type="journal article" date="2013" name="J. Biol. Chem.">
        <title>The chlorite dismutase (HemQ) from Staphylococcus aureus has a redox-sensitive heme and is associated with the small colony variant phenotype.</title>
        <authorList>
            <person name="Mayfield J.A."/>
            <person name="Hammer N.D."/>
            <person name="Kurker R.C."/>
            <person name="Chen T.K."/>
            <person name="Ojha S."/>
            <person name="Skaar E.P."/>
            <person name="DuBois J.L."/>
        </authorList>
    </citation>
    <scope>FUNCTION</scope>
    <scope>COFACTOR</scope>
    <scope>PATHWAY</scope>
    <scope>SUBUNIT</scope>
    <scope>DISRUPTION PHENOTYPE</scope>
    <source>
        <strain>Newman</strain>
    </source>
</reference>
<reference key="3">
    <citation type="journal article" date="2015" name="Biochemistry">
        <title>Unusual peroxide-dependent, heme-transforming reaction catalyzed by HemQ.</title>
        <authorList>
            <person name="Celis A.I."/>
            <person name="Streit B.R."/>
            <person name="Moraski G.C."/>
            <person name="Kant R."/>
            <person name="Lash T.D."/>
            <person name="Lukat-Rodgers G.S."/>
            <person name="Rodgers K.R."/>
            <person name="DuBois J.L."/>
        </authorList>
    </citation>
    <scope>FUNCTION</scope>
    <scope>CATALYTIC ACTIVITY</scope>
    <scope>PATHWAY</scope>
</reference>
<reference key="4">
    <citation type="journal article" date="2017" name="J. Am. Chem. Soc.">
        <title>Structure-based mechanism for oxidative decarboxylation reactions mediated by amino acids and heme propionates in coproheme decarboxylase (HemQ).</title>
        <authorList>
            <person name="Celis A.I."/>
            <person name="Gauss G.H."/>
            <person name="Streit B.R."/>
            <person name="Shisler K."/>
            <person name="Moraski G.C."/>
            <person name="Rodgers K.R."/>
            <person name="Lukat-Rodgers G.S."/>
            <person name="Peters J.W."/>
            <person name="DuBois J.L."/>
        </authorList>
    </citation>
    <scope>FUNCTION</scope>
    <scope>CATALYTIC ACTIVITY</scope>
    <scope>COFACTOR</scope>
    <scope>ACTIVE SITE</scope>
    <scope>MUTAGENESIS OF TYR-113; ARG-131; TYR-145; LYS-149; TRP-157; GLN-185; TRP-198 AND ARG-218</scope>
</reference>
<reference key="5">
    <citation type="journal article" date="2017" name="Biochemistry">
        <title>Reactions of ferrous coproheme decarboxylase (HemQ) with O2 and H2O2 yield ferric heme b.</title>
        <authorList>
            <person name="Streit B.R."/>
            <person name="Celis A.I."/>
            <person name="Shisler K."/>
            <person name="Rodgers K.R."/>
            <person name="Lukat-Rodgers G.S."/>
            <person name="DuBois J.L."/>
        </authorList>
    </citation>
    <scope>FUNCTION</scope>
    <scope>CATALYTIC ACTIVITY</scope>
</reference>
<feature type="chain" id="PRO_1000073519" description="Coproheme decarboxylase">
    <location>
        <begin position="1"/>
        <end position="250"/>
    </location>
</feature>
<feature type="active site" evidence="1 10">
    <location>
        <position position="145"/>
    </location>
</feature>
<feature type="binding site" evidence="1">
    <location>
        <position position="131"/>
    </location>
    <ligand>
        <name>Fe-coproporphyrin III</name>
        <dbReference type="ChEBI" id="CHEBI:68438"/>
    </ligand>
</feature>
<feature type="binding site" evidence="1">
    <location>
        <begin position="145"/>
        <end position="149"/>
    </location>
    <ligand>
        <name>Fe-coproporphyrin III</name>
        <dbReference type="ChEBI" id="CHEBI:68438"/>
    </ligand>
</feature>
<feature type="binding site" description="axial binding residue" evidence="1">
    <location>
        <position position="172"/>
    </location>
    <ligand>
        <name>Fe-coproporphyrin III</name>
        <dbReference type="ChEBI" id="CHEBI:68438"/>
    </ligand>
    <ligandPart>
        <name>Fe</name>
        <dbReference type="ChEBI" id="CHEBI:18248"/>
    </ligandPart>
</feature>
<feature type="binding site" evidence="1">
    <location>
        <position position="185"/>
    </location>
    <ligand>
        <name>Fe-coproporphyrin III</name>
        <dbReference type="ChEBI" id="CHEBI:68438"/>
    </ligand>
</feature>
<feature type="mutagenesis site" description="Has little effect on activity." evidence="4">
    <original>Y</original>
    <variation>S</variation>
    <location>
        <position position="113"/>
    </location>
</feature>
<feature type="mutagenesis site" description="Has little effect on activity." evidence="4">
    <original>R</original>
    <variation>A</variation>
    <location>
        <position position="131"/>
    </location>
</feature>
<feature type="mutagenesis site" description="Loss of activity." evidence="4">
    <original>Y</original>
    <variation>S</variation>
    <location>
        <position position="145"/>
    </location>
</feature>
<feature type="mutagenesis site" description="Forms harderoheme III as major product with relatively little turnover to heme b." evidence="4">
    <original>K</original>
    <variation>A</variation>
    <location>
        <position position="149"/>
    </location>
</feature>
<feature type="mutagenesis site" description="Has little effect on activity." evidence="4">
    <original>W</original>
    <variation>F</variation>
    <location>
        <position position="157"/>
    </location>
</feature>
<feature type="mutagenesis site" description="Has little effect on activity. Does not accumulate harderoheme III." evidence="4">
    <original>Q</original>
    <variation>A</variation>
    <location>
        <position position="185"/>
    </location>
</feature>
<feature type="mutagenesis site" description="Has little effect on activity." evidence="4">
    <original>W</original>
    <variation>F</variation>
    <location>
        <position position="198"/>
    </location>
</feature>
<feature type="mutagenesis site" description="Has little effect on activity." evidence="4">
    <original>R</original>
    <variation>A</variation>
    <location>
        <position position="218"/>
    </location>
</feature>
<gene>
    <name evidence="1" type="primary">chdC</name>
    <name evidence="6" type="synonym">hemQ</name>
    <name type="ordered locus">NWMN_0550</name>
</gene>
<sequence>MSQAAETLDGWYSLHLFYAVDWASLRIVPKDERDALVTEFQSFLENTATVRSSKSGDQAIYNITGQKADLLLWFLRPEMKSLNHIENEFNKLRIADFLIPTYSYVSVIELSNYLAGKSDEDPYENPHIKARLYPELPHSDYICFYPMNKRRNETYNWYMLTMEERQKLMYDHGMIGRKYAGKIKQFITGSVGFDDFEWGVTLFSDDVLQFKKIVYEMRFDETTARYGEFGSFFVGHIINTNEFDQFFAIS</sequence>
<comment type="function">
    <text evidence="2 3 4 5">Involved in coproporphyrin-dependent heme b biosynthesis (PubMed:26083961). Catalyzes the decarboxylation of Fe-coproporphyrin III (coproheme) to heme b (protoheme IX), the last step of the pathway (PubMed:26083961, PubMed:27936663, PubMed:27982566). The reaction occurs in a stepwise manner with a three-propionate harderoheme intermediate (PubMed:26083961, PubMed:27936663, PubMed:27982566). The first decarboxylation step is fast and yields the three-propionate harderoheme isomer III intermediate, while the slower second decarboxylation appears to control the overall rate. H(2)O(2) is the assumed biological oxidant, but either H(2)O(2) or peracetic acid yields the same intermediates and products (PubMed:26083961). Has weak peroxidase and catalase activities in vitro (PubMed:23737523).</text>
</comment>
<comment type="catalytic activity">
    <reaction evidence="1 3 4 5">
        <text>Fe-coproporphyrin III + 2 H2O2 + 2 H(+) = heme b + 2 CO2 + 4 H2O</text>
        <dbReference type="Rhea" id="RHEA:56516"/>
        <dbReference type="ChEBI" id="CHEBI:15377"/>
        <dbReference type="ChEBI" id="CHEBI:15378"/>
        <dbReference type="ChEBI" id="CHEBI:16240"/>
        <dbReference type="ChEBI" id="CHEBI:16526"/>
        <dbReference type="ChEBI" id="CHEBI:60344"/>
        <dbReference type="ChEBI" id="CHEBI:68438"/>
        <dbReference type="EC" id="1.3.98.5"/>
    </reaction>
    <physiologicalReaction direction="left-to-right" evidence="1 3 4">
        <dbReference type="Rhea" id="RHEA:56517"/>
    </physiologicalReaction>
</comment>
<comment type="catalytic activity">
    <reaction evidence="1 3 4">
        <text>Fe-coproporphyrin III + H2O2 + H(+) = harderoheme III + CO2 + 2 H2O</text>
        <dbReference type="Rhea" id="RHEA:57940"/>
        <dbReference type="ChEBI" id="CHEBI:15377"/>
        <dbReference type="ChEBI" id="CHEBI:15378"/>
        <dbReference type="ChEBI" id="CHEBI:16240"/>
        <dbReference type="ChEBI" id="CHEBI:16526"/>
        <dbReference type="ChEBI" id="CHEBI:68438"/>
        <dbReference type="ChEBI" id="CHEBI:142463"/>
    </reaction>
    <physiologicalReaction direction="left-to-right" evidence="1 3 4">
        <dbReference type="Rhea" id="RHEA:57941"/>
    </physiologicalReaction>
</comment>
<comment type="catalytic activity">
    <reaction evidence="1 3 4">
        <text>harderoheme III + H2O2 + H(+) = heme b + CO2 + 2 H2O</text>
        <dbReference type="Rhea" id="RHEA:57944"/>
        <dbReference type="ChEBI" id="CHEBI:15377"/>
        <dbReference type="ChEBI" id="CHEBI:15378"/>
        <dbReference type="ChEBI" id="CHEBI:16240"/>
        <dbReference type="ChEBI" id="CHEBI:16526"/>
        <dbReference type="ChEBI" id="CHEBI:60344"/>
        <dbReference type="ChEBI" id="CHEBI:142463"/>
    </reaction>
    <physiologicalReaction direction="left-to-right" evidence="1 3 4">
        <dbReference type="Rhea" id="RHEA:57945"/>
    </physiologicalReaction>
</comment>
<comment type="cofactor">
    <cofactor evidence="1 10">
        <name>Fe-coproporphyrin III</name>
        <dbReference type="ChEBI" id="CHEBI:68438"/>
    </cofactor>
    <text evidence="2 10">Fe-coproporphyrin III acts both as a substrate and redox cofactor (Probable). Was originally thought to use heme as a cofactor (PubMed:23737523).</text>
</comment>
<comment type="pathway">
    <text evidence="1 8 9">Porphyrin-containing compound metabolism; protoheme biosynthesis.</text>
</comment>
<comment type="subunit">
    <text evidence="2">Homohexamer.</text>
</comment>
<comment type="disruption phenotype">
    <text evidence="2">Deletion mutant forms slow growing small colonies under aerobic but not anaerobic conditions. Mutant accumulates coproporphyrin specifically under aerobic conditions and shows deficiencies in catalase activity and peroxide resistance.</text>
</comment>
<comment type="similarity">
    <text evidence="1 7">Belongs to the ChdC family. Type 1 subfamily.</text>
</comment>
<proteinExistence type="evidence at protein level"/>
<keyword id="KW-0349">Heme</keyword>
<keyword id="KW-0350">Heme biosynthesis</keyword>
<keyword id="KW-0408">Iron</keyword>
<keyword id="KW-0479">Metal-binding</keyword>
<keyword id="KW-0560">Oxidoreductase</keyword>
<name>CHDC_STAAE</name>
<protein>
    <recommendedName>
        <fullName evidence="1 7">Coproheme decarboxylase</fullName>
        <ecNumber evidence="1 3 4 5">1.3.98.5</ecNumber>
    </recommendedName>
    <alternativeName>
        <fullName evidence="1 7">Coproheme III oxidative decarboxylase</fullName>
    </alternativeName>
    <alternativeName>
        <fullName evidence="1 7">Hydrogen peroxide-dependent heme synthase</fullName>
    </alternativeName>
</protein>
<dbReference type="EC" id="1.3.98.5" evidence="1 3 4 5"/>
<dbReference type="EMBL" id="AP009351">
    <property type="protein sequence ID" value="BAF66822.1"/>
    <property type="molecule type" value="Genomic_DNA"/>
</dbReference>
<dbReference type="RefSeq" id="WP_000075703.1">
    <property type="nucleotide sequence ID" value="NZ_JBBIAE010000002.1"/>
</dbReference>
<dbReference type="SMR" id="A6QEP0"/>
<dbReference type="KEGG" id="sae:NWMN_0550"/>
<dbReference type="HOGENOM" id="CLU_063226_1_0_9"/>
<dbReference type="UniPathway" id="UPA00252"/>
<dbReference type="Proteomes" id="UP000006386">
    <property type="component" value="Chromosome"/>
</dbReference>
<dbReference type="GO" id="GO:0020037">
    <property type="term" value="F:heme binding"/>
    <property type="evidence" value="ECO:0007669"/>
    <property type="project" value="InterPro"/>
</dbReference>
<dbReference type="GO" id="GO:0046872">
    <property type="term" value="F:metal ion binding"/>
    <property type="evidence" value="ECO:0007669"/>
    <property type="project" value="UniProtKB-KW"/>
</dbReference>
<dbReference type="GO" id="GO:0016634">
    <property type="term" value="F:oxidoreductase activity, acting on the CH-CH group of donors, oxygen as acceptor"/>
    <property type="evidence" value="ECO:0007669"/>
    <property type="project" value="UniProtKB-UniRule"/>
</dbReference>
<dbReference type="GO" id="GO:0004601">
    <property type="term" value="F:peroxidase activity"/>
    <property type="evidence" value="ECO:0007669"/>
    <property type="project" value="InterPro"/>
</dbReference>
<dbReference type="GO" id="GO:0006785">
    <property type="term" value="P:heme B biosynthetic process"/>
    <property type="evidence" value="ECO:0007669"/>
    <property type="project" value="UniProtKB-UniRule"/>
</dbReference>
<dbReference type="Gene3D" id="3.30.70.1030">
    <property type="entry name" value="Apc35880, domain 1"/>
    <property type="match status" value="2"/>
</dbReference>
<dbReference type="HAMAP" id="MF_01442">
    <property type="entry name" value="Coproheme_decarbox_1"/>
    <property type="match status" value="1"/>
</dbReference>
<dbReference type="InterPro" id="IPR031332">
    <property type="entry name" value="CHDC"/>
</dbReference>
<dbReference type="InterPro" id="IPR010644">
    <property type="entry name" value="ChdC/CLD"/>
</dbReference>
<dbReference type="InterPro" id="IPR011008">
    <property type="entry name" value="Dimeric_a/b-barrel"/>
</dbReference>
<dbReference type="NCBIfam" id="NF008913">
    <property type="entry name" value="PRK12276.1"/>
    <property type="match status" value="1"/>
</dbReference>
<dbReference type="PANTHER" id="PTHR36843:SF1">
    <property type="entry name" value="COPROHEME DECARBOXYLASE"/>
    <property type="match status" value="1"/>
</dbReference>
<dbReference type="PANTHER" id="PTHR36843">
    <property type="entry name" value="HEME-DEPENDENT PEROXIDASE YWFI-RELATED"/>
    <property type="match status" value="1"/>
</dbReference>
<dbReference type="Pfam" id="PF06778">
    <property type="entry name" value="Chlor_dismutase"/>
    <property type="match status" value="1"/>
</dbReference>
<dbReference type="SUPFAM" id="SSF54909">
    <property type="entry name" value="Dimeric alpha+beta barrel"/>
    <property type="match status" value="1"/>
</dbReference>
<evidence type="ECO:0000255" key="1">
    <source>
        <dbReference type="HAMAP-Rule" id="MF_01442"/>
    </source>
</evidence>
<evidence type="ECO:0000269" key="2">
    <source>
    </source>
</evidence>
<evidence type="ECO:0000269" key="3">
    <source>
    </source>
</evidence>
<evidence type="ECO:0000269" key="4">
    <source>
    </source>
</evidence>
<evidence type="ECO:0000269" key="5">
    <source>
    </source>
</evidence>
<evidence type="ECO:0000303" key="6">
    <source>
    </source>
</evidence>
<evidence type="ECO:0000305" key="7"/>
<evidence type="ECO:0000305" key="8">
    <source>
    </source>
</evidence>
<evidence type="ECO:0000305" key="9">
    <source>
    </source>
</evidence>
<evidence type="ECO:0000305" key="10">
    <source>
    </source>
</evidence>
<organism>
    <name type="scientific">Staphylococcus aureus (strain Newman)</name>
    <dbReference type="NCBI Taxonomy" id="426430"/>
    <lineage>
        <taxon>Bacteria</taxon>
        <taxon>Bacillati</taxon>
        <taxon>Bacillota</taxon>
        <taxon>Bacilli</taxon>
        <taxon>Bacillales</taxon>
        <taxon>Staphylococcaceae</taxon>
        <taxon>Staphylococcus</taxon>
    </lineage>
</organism>
<accession>A6QEP0</accession>